<dbReference type="EC" id="7.1.1.2" evidence="1"/>
<dbReference type="EMBL" id="CP017625">
    <property type="protein sequence ID" value="AOW28183.1"/>
    <property type="molecule type" value="Genomic_DNA"/>
</dbReference>
<dbReference type="RefSeq" id="XP_721781.2">
    <property type="nucleotide sequence ID" value="XM_716688.2"/>
</dbReference>
<dbReference type="SMR" id="A0A1D8PJ73"/>
<dbReference type="STRING" id="237561.A0A1D8PJ73"/>
<dbReference type="EnsemblFungi" id="C3_01410C_A-T">
    <property type="protein sequence ID" value="C3_01410C_A-T-p1"/>
    <property type="gene ID" value="C3_01410C_A"/>
</dbReference>
<dbReference type="GeneID" id="3636635"/>
<dbReference type="KEGG" id="cal:CAALFM_C301410CA"/>
<dbReference type="CGD" id="CAL0000194133">
    <property type="gene designation" value="ALI1"/>
</dbReference>
<dbReference type="VEuPathDB" id="FungiDB:C3_01410C_A"/>
<dbReference type="eggNOG" id="KOG1713">
    <property type="taxonomic scope" value="Eukaryota"/>
</dbReference>
<dbReference type="InParanoid" id="A0A1D8PJ73"/>
<dbReference type="OrthoDB" id="37721at2759"/>
<dbReference type="Proteomes" id="UP000000559">
    <property type="component" value="Chromosome 3"/>
</dbReference>
<dbReference type="GO" id="GO:0016020">
    <property type="term" value="C:membrane"/>
    <property type="evidence" value="ECO:0000314"/>
    <property type="project" value="CGD"/>
</dbReference>
<dbReference type="GO" id="GO:0005743">
    <property type="term" value="C:mitochondrial inner membrane"/>
    <property type="evidence" value="ECO:0007669"/>
    <property type="project" value="UniProtKB-SubCell"/>
</dbReference>
<dbReference type="GO" id="GO:0005886">
    <property type="term" value="C:plasma membrane"/>
    <property type="evidence" value="ECO:0000314"/>
    <property type="project" value="CGD"/>
</dbReference>
<dbReference type="GO" id="GO:0045271">
    <property type="term" value="C:respiratory chain complex I"/>
    <property type="evidence" value="ECO:0000318"/>
    <property type="project" value="GO_Central"/>
</dbReference>
<dbReference type="GO" id="GO:0008137">
    <property type="term" value="F:NADH dehydrogenase (ubiquinone) activity"/>
    <property type="evidence" value="ECO:0007669"/>
    <property type="project" value="InterPro"/>
</dbReference>
<dbReference type="FunFam" id="3.30.460.80:FF:000002">
    <property type="entry name" value="NADH dehydrogenase iron-sulfur protein 3, mitochondrial"/>
    <property type="match status" value="1"/>
</dbReference>
<dbReference type="Gene3D" id="3.30.460.80">
    <property type="entry name" value="NADH:ubiquinone oxidoreductase, 30kDa subunit"/>
    <property type="match status" value="1"/>
</dbReference>
<dbReference type="HAMAP" id="MF_01357">
    <property type="entry name" value="NDH1_NuoC"/>
    <property type="match status" value="1"/>
</dbReference>
<dbReference type="InterPro" id="IPR010218">
    <property type="entry name" value="NADH_DH_suC"/>
</dbReference>
<dbReference type="InterPro" id="IPR037232">
    <property type="entry name" value="NADH_quin_OxRdtase_su_C/D-like"/>
</dbReference>
<dbReference type="InterPro" id="IPR001268">
    <property type="entry name" value="NADH_UbQ_OxRdtase_30kDa_su"/>
</dbReference>
<dbReference type="InterPro" id="IPR020396">
    <property type="entry name" value="NADH_UbQ_OxRdtase_CS"/>
</dbReference>
<dbReference type="NCBIfam" id="TIGR01961">
    <property type="entry name" value="NuoC_fam"/>
    <property type="match status" value="1"/>
</dbReference>
<dbReference type="NCBIfam" id="NF004733">
    <property type="entry name" value="PRK06074.1-5"/>
    <property type="match status" value="1"/>
</dbReference>
<dbReference type="PANTHER" id="PTHR10884:SF14">
    <property type="entry name" value="NADH DEHYDROGENASE [UBIQUINONE] IRON-SULFUR PROTEIN 3, MITOCHONDRIAL"/>
    <property type="match status" value="1"/>
</dbReference>
<dbReference type="PANTHER" id="PTHR10884">
    <property type="entry name" value="NADH DEHYDROGENASE UBIQUINONE IRON-SULFUR PROTEIN 3"/>
    <property type="match status" value="1"/>
</dbReference>
<dbReference type="Pfam" id="PF00329">
    <property type="entry name" value="Complex1_30kDa"/>
    <property type="match status" value="1"/>
</dbReference>
<dbReference type="SUPFAM" id="SSF143243">
    <property type="entry name" value="Nqo5-like"/>
    <property type="match status" value="1"/>
</dbReference>
<dbReference type="PROSITE" id="PS00542">
    <property type="entry name" value="COMPLEX1_30K"/>
    <property type="match status" value="1"/>
</dbReference>
<comment type="function">
    <text evidence="1 6">Core subunit of the mitochondrial membrane respiratory chain NADH dehydrogenase (Complex I) which catalyzes electron transfer from NADH through the respiratory chain, using ubiquinone as an electron acceptor (By similarity). Plays a role in cell wall integrity and is involved in osmotic and oxidative resistance, yeast to hypha transition and the ability to damage and invade oral epithelial cells (PubMed:26087349).</text>
</comment>
<comment type="catalytic activity">
    <reaction evidence="1">
        <text>a ubiquinone + NADH + 5 H(+)(in) = a ubiquinol + NAD(+) + 4 H(+)(out)</text>
        <dbReference type="Rhea" id="RHEA:29091"/>
        <dbReference type="Rhea" id="RHEA-COMP:9565"/>
        <dbReference type="Rhea" id="RHEA-COMP:9566"/>
        <dbReference type="ChEBI" id="CHEBI:15378"/>
        <dbReference type="ChEBI" id="CHEBI:16389"/>
        <dbReference type="ChEBI" id="CHEBI:17976"/>
        <dbReference type="ChEBI" id="CHEBI:57540"/>
        <dbReference type="ChEBI" id="CHEBI:57945"/>
        <dbReference type="EC" id="7.1.1.2"/>
    </reaction>
</comment>
<comment type="subunit">
    <text evidence="1">Core subunit of respiratory chain NADH dehydrogenase (Complex I).</text>
</comment>
<comment type="subcellular location">
    <subcellularLocation>
        <location evidence="1">Mitochondrion inner membrane</location>
        <topology evidence="1">Peripheral membrane protein</topology>
        <orientation evidence="1">Matrix side</orientation>
    </subcellularLocation>
</comment>
<comment type="induction">
    <text evidence="4 5">Expression is down-regulated during stationary phase (PubMed:17588813). Expression is repressed in the presence of nitric oxide (PubMed:16030247).</text>
</comment>
<comment type="disruption phenotype">
    <text evidence="6">Leads to sensitivity to both cell wall-damaging agents calcofluor white and Congo red, as well as to thermosensitivity (PubMed:26087349). Also increases the sensitivity to oxidative stress agents H(2)O(2) and menadione, as well as to osmotic stress agents sorbitol and KCl (PubMed:26087349). Impairs the yeast to hypha transition (PubMed:26087349). Increases the phagocytosis rate by host macrophages and causes significantly less damage to host oral epithelial cells (PubMed:26087349).</text>
</comment>
<comment type="similarity">
    <text evidence="7">Belongs to the complex I 30 kDa subunit family.</text>
</comment>
<feature type="transit peptide" description="Mitochondrion" evidence="2">
    <location>
        <begin position="1"/>
        <end position="27"/>
    </location>
</feature>
<feature type="chain" id="PRO_0000459484" description="NADH dehydrogenase [ubiquinone] iron-sulfur protein 3, mitochondrial">
    <location>
        <begin position="28"/>
        <end position="279"/>
    </location>
</feature>
<feature type="region of interest" description="Disordered" evidence="3">
    <location>
        <begin position="249"/>
        <end position="279"/>
    </location>
</feature>
<feature type="compositionally biased region" description="Basic and acidic residues" evidence="3">
    <location>
        <begin position="270"/>
        <end position="279"/>
    </location>
</feature>
<sequence>MISRTLLKRSLPTVQFLRPFTRSSIRRSAHEEDLVNLNELPRQKSLEENYVPLINPTEKYKVQIEELHKFGTYIMACLPKYVQQFSVWKDELTIYVAPSAILPTMLFLKNNTACQFKQVSDVTAADYPSRTNRFDVVYNLLSVRHNSRIRVKTYANETTPVPSITPLFNGANWFERETYDLFGVFFEGHPDLRRILTDYGFEGHPLRKDFPTTGYTEVRYDEEKKRIIYEPLELTQAWRNFTVGSSVWEPVGEGKDFTPESFKLPTPEPEPEKESDEKK</sequence>
<accession>A0A1D8PJ73</accession>
<protein>
    <recommendedName>
        <fullName evidence="1">NADH dehydrogenase [ubiquinone] iron-sulfur protein 3, mitochondrial</fullName>
        <ecNumber evidence="1">7.1.1.2</ecNumber>
    </recommendedName>
</protein>
<name>NDUS3_CANAL</name>
<reference key="1">
    <citation type="journal article" date="2004" name="Proc. Natl. Acad. Sci. U.S.A.">
        <title>The diploid genome sequence of Candida albicans.</title>
        <authorList>
            <person name="Jones T."/>
            <person name="Federspiel N.A."/>
            <person name="Chibana H."/>
            <person name="Dungan J."/>
            <person name="Kalman S."/>
            <person name="Magee B.B."/>
            <person name="Newport G."/>
            <person name="Thorstenson Y.R."/>
            <person name="Agabian N."/>
            <person name="Magee P.T."/>
            <person name="Davis R.W."/>
            <person name="Scherer S."/>
        </authorList>
    </citation>
    <scope>NUCLEOTIDE SEQUENCE [LARGE SCALE GENOMIC DNA]</scope>
    <source>
        <strain>SC5314 / ATCC MYA-2876</strain>
    </source>
</reference>
<reference key="2">
    <citation type="journal article" date="2007" name="Genome Biol.">
        <title>Assembly of the Candida albicans genome into sixteen supercontigs aligned on the eight chromosomes.</title>
        <authorList>
            <person name="van het Hoog M."/>
            <person name="Rast T.J."/>
            <person name="Martchenko M."/>
            <person name="Grindle S."/>
            <person name="Dignard D."/>
            <person name="Hogues H."/>
            <person name="Cuomo C."/>
            <person name="Berriman M."/>
            <person name="Scherer S."/>
            <person name="Magee B.B."/>
            <person name="Whiteway M."/>
            <person name="Chibana H."/>
            <person name="Nantel A."/>
            <person name="Magee P.T."/>
        </authorList>
    </citation>
    <scope>GENOME REANNOTATION</scope>
    <source>
        <strain>SC5314 / ATCC MYA-2876</strain>
    </source>
</reference>
<reference key="3">
    <citation type="journal article" date="2013" name="Genome Biol.">
        <title>Assembly of a phased diploid Candida albicans genome facilitates allele-specific measurements and provides a simple model for repeat and indel structure.</title>
        <authorList>
            <person name="Muzzey D."/>
            <person name="Schwartz K."/>
            <person name="Weissman J.S."/>
            <person name="Sherlock G."/>
        </authorList>
    </citation>
    <scope>NUCLEOTIDE SEQUENCE [LARGE SCALE GENOMIC DNA]</scope>
    <scope>GENOME REANNOTATION</scope>
    <source>
        <strain>SC5314 / ATCC MYA-2876</strain>
    </source>
</reference>
<reference key="4">
    <citation type="journal article" date="2005" name="Mol. Biol. Cell">
        <title>Transcriptional response of Candida albicans to nitric oxide and the role of the YHB1 gene in nitrosative stress and virulence.</title>
        <authorList>
            <person name="Hromatka B.S."/>
            <person name="Noble S.M."/>
            <person name="Johnson A.D."/>
        </authorList>
    </citation>
    <scope>INDUCTION</scope>
</reference>
<reference key="5">
    <citation type="journal article" date="2008" name="Int. J. Med. Microbiol.">
        <title>A proteomic view of Candida albicans yeast cell metabolism in exponential and stationary growth phases.</title>
        <authorList>
            <person name="Kusch H."/>
            <person name="Engelmann S."/>
            <person name="Bode R."/>
            <person name="Albrecht D."/>
            <person name="Morschhauser J."/>
            <person name="Hecker M."/>
        </authorList>
    </citation>
    <scope>INDUCTION</scope>
</reference>
<reference key="6">
    <citation type="journal article" date="2009" name="Proteomics">
        <title>Analysis of Candida albicans plasma membrane proteome.</title>
        <authorList>
            <person name="Cabezon V."/>
            <person name="Llama-Palacios A."/>
            <person name="Nombela C."/>
            <person name="Monteoliva L."/>
            <person name="Gil C."/>
        </authorList>
    </citation>
    <scope>SUBCELLULAR LOCATION [LARGE SCALE]</scope>
</reference>
<reference key="7">
    <citation type="journal article" date="2015" name="J. Proteomics">
        <title>Candida albicans cell shaving uncovers new proteins involved in cell wall integrity, yeast to hypha transition, stress response and host-pathogen interaction.</title>
        <authorList>
            <person name="Gil-Bona A."/>
            <person name="Parra-Giraldo C.M."/>
            <person name="Hernaez M.L."/>
            <person name="Reales-Calderon J.A."/>
            <person name="Solis N.V."/>
            <person name="Filler S.G."/>
            <person name="Monteoliva L."/>
            <person name="Gil C."/>
        </authorList>
    </citation>
    <scope>FUNCTION</scope>
    <scope>DISRUPTION PHENOTYPE</scope>
</reference>
<keyword id="KW-0472">Membrane</keyword>
<keyword id="KW-0496">Mitochondrion</keyword>
<keyword id="KW-0999">Mitochondrion inner membrane</keyword>
<keyword id="KW-0520">NAD</keyword>
<keyword id="KW-0560">Oxidoreductase</keyword>
<keyword id="KW-1185">Reference proteome</keyword>
<keyword id="KW-0809">Transit peptide</keyword>
<keyword id="KW-1278">Translocase</keyword>
<keyword id="KW-0813">Transport</keyword>
<keyword id="KW-0830">Ubiquinone</keyword>
<keyword id="KW-0843">Virulence</keyword>
<evidence type="ECO:0000250" key="1">
    <source>
        <dbReference type="UniProtKB" id="O75489"/>
    </source>
</evidence>
<evidence type="ECO:0000255" key="2"/>
<evidence type="ECO:0000256" key="3">
    <source>
        <dbReference type="SAM" id="MobiDB-lite"/>
    </source>
</evidence>
<evidence type="ECO:0000269" key="4">
    <source>
    </source>
</evidence>
<evidence type="ECO:0000269" key="5">
    <source>
    </source>
</evidence>
<evidence type="ECO:0000269" key="6">
    <source>
    </source>
</evidence>
<evidence type="ECO:0000305" key="7"/>
<proteinExistence type="evidence at transcript level"/>
<organism>
    <name type="scientific">Candida albicans (strain SC5314 / ATCC MYA-2876)</name>
    <name type="common">Yeast</name>
    <dbReference type="NCBI Taxonomy" id="237561"/>
    <lineage>
        <taxon>Eukaryota</taxon>
        <taxon>Fungi</taxon>
        <taxon>Dikarya</taxon>
        <taxon>Ascomycota</taxon>
        <taxon>Saccharomycotina</taxon>
        <taxon>Pichiomycetes</taxon>
        <taxon>Debaryomycetaceae</taxon>
        <taxon>Candida/Lodderomyces clade</taxon>
        <taxon>Candida</taxon>
    </lineage>
</organism>
<gene>
    <name type="primary">ALI1</name>
    <name type="ordered locus">CAALFM_C301410CA</name>
    <name type="ordered locus">orf19.9277</name>
</gene>